<feature type="chain" id="PRO_1000201454" description="Elongation factor G">
    <location>
        <begin position="1"/>
        <end position="692"/>
    </location>
</feature>
<feature type="domain" description="tr-type G">
    <location>
        <begin position="8"/>
        <end position="282"/>
    </location>
</feature>
<feature type="region of interest" description="Disordered" evidence="2">
    <location>
        <begin position="285"/>
        <end position="304"/>
    </location>
</feature>
<feature type="compositionally biased region" description="Basic and acidic residues" evidence="2">
    <location>
        <begin position="290"/>
        <end position="304"/>
    </location>
</feature>
<feature type="binding site" evidence="1">
    <location>
        <begin position="17"/>
        <end position="24"/>
    </location>
    <ligand>
        <name>GTP</name>
        <dbReference type="ChEBI" id="CHEBI:37565"/>
    </ligand>
</feature>
<feature type="binding site" evidence="1">
    <location>
        <begin position="81"/>
        <end position="85"/>
    </location>
    <ligand>
        <name>GTP</name>
        <dbReference type="ChEBI" id="CHEBI:37565"/>
    </ligand>
</feature>
<feature type="binding site" evidence="1">
    <location>
        <begin position="135"/>
        <end position="138"/>
    </location>
    <ligand>
        <name>GTP</name>
        <dbReference type="ChEBI" id="CHEBI:37565"/>
    </ligand>
</feature>
<keyword id="KW-0963">Cytoplasm</keyword>
<keyword id="KW-0251">Elongation factor</keyword>
<keyword id="KW-0342">GTP-binding</keyword>
<keyword id="KW-0547">Nucleotide-binding</keyword>
<keyword id="KW-0648">Protein biosynthesis</keyword>
<name>EFG_DESHD</name>
<protein>
    <recommendedName>
        <fullName evidence="1">Elongation factor G</fullName>
        <shortName evidence="1">EF-G</shortName>
    </recommendedName>
</protein>
<comment type="function">
    <text evidence="1">Catalyzes the GTP-dependent ribosomal translocation step during translation elongation. During this step, the ribosome changes from the pre-translocational (PRE) to the post-translocational (POST) state as the newly formed A-site-bound peptidyl-tRNA and P-site-bound deacylated tRNA move to the P and E sites, respectively. Catalyzes the coordinated movement of the two tRNA molecules, the mRNA and conformational changes in the ribosome.</text>
</comment>
<comment type="subcellular location">
    <subcellularLocation>
        <location evidence="1">Cytoplasm</location>
    </subcellularLocation>
</comment>
<comment type="similarity">
    <text evidence="1">Belongs to the TRAFAC class translation factor GTPase superfamily. Classic translation factor GTPase family. EF-G/EF-2 subfamily.</text>
</comment>
<dbReference type="EMBL" id="CP001336">
    <property type="protein sequence ID" value="ACL18486.1"/>
    <property type="molecule type" value="Genomic_DNA"/>
</dbReference>
<dbReference type="RefSeq" id="WP_015942752.1">
    <property type="nucleotide sequence ID" value="NC_011830.1"/>
</dbReference>
<dbReference type="SMR" id="B8G1W3"/>
<dbReference type="KEGG" id="dhd:Dhaf_0419"/>
<dbReference type="HOGENOM" id="CLU_002794_4_1_9"/>
<dbReference type="Proteomes" id="UP000007726">
    <property type="component" value="Chromosome"/>
</dbReference>
<dbReference type="GO" id="GO:0005737">
    <property type="term" value="C:cytoplasm"/>
    <property type="evidence" value="ECO:0007669"/>
    <property type="project" value="UniProtKB-SubCell"/>
</dbReference>
<dbReference type="GO" id="GO:0005525">
    <property type="term" value="F:GTP binding"/>
    <property type="evidence" value="ECO:0007669"/>
    <property type="project" value="UniProtKB-UniRule"/>
</dbReference>
<dbReference type="GO" id="GO:0003924">
    <property type="term" value="F:GTPase activity"/>
    <property type="evidence" value="ECO:0007669"/>
    <property type="project" value="InterPro"/>
</dbReference>
<dbReference type="GO" id="GO:0003746">
    <property type="term" value="F:translation elongation factor activity"/>
    <property type="evidence" value="ECO:0007669"/>
    <property type="project" value="UniProtKB-UniRule"/>
</dbReference>
<dbReference type="GO" id="GO:0032790">
    <property type="term" value="P:ribosome disassembly"/>
    <property type="evidence" value="ECO:0007669"/>
    <property type="project" value="TreeGrafter"/>
</dbReference>
<dbReference type="CDD" id="cd01886">
    <property type="entry name" value="EF-G"/>
    <property type="match status" value="1"/>
</dbReference>
<dbReference type="CDD" id="cd16262">
    <property type="entry name" value="EFG_III"/>
    <property type="match status" value="1"/>
</dbReference>
<dbReference type="CDD" id="cd01434">
    <property type="entry name" value="EFG_mtEFG1_IV"/>
    <property type="match status" value="1"/>
</dbReference>
<dbReference type="CDD" id="cd03713">
    <property type="entry name" value="EFG_mtEFG_C"/>
    <property type="match status" value="1"/>
</dbReference>
<dbReference type="CDD" id="cd04088">
    <property type="entry name" value="EFG_mtEFG_II"/>
    <property type="match status" value="1"/>
</dbReference>
<dbReference type="FunFam" id="2.40.30.10:FF:000006">
    <property type="entry name" value="Elongation factor G"/>
    <property type="match status" value="1"/>
</dbReference>
<dbReference type="FunFam" id="3.30.230.10:FF:000003">
    <property type="entry name" value="Elongation factor G"/>
    <property type="match status" value="1"/>
</dbReference>
<dbReference type="FunFam" id="3.30.70.240:FF:000001">
    <property type="entry name" value="Elongation factor G"/>
    <property type="match status" value="1"/>
</dbReference>
<dbReference type="FunFam" id="3.30.70.870:FF:000001">
    <property type="entry name" value="Elongation factor G"/>
    <property type="match status" value="1"/>
</dbReference>
<dbReference type="FunFam" id="3.40.50.300:FF:000029">
    <property type="entry name" value="Elongation factor G"/>
    <property type="match status" value="1"/>
</dbReference>
<dbReference type="Gene3D" id="3.30.230.10">
    <property type="match status" value="1"/>
</dbReference>
<dbReference type="Gene3D" id="3.30.70.240">
    <property type="match status" value="1"/>
</dbReference>
<dbReference type="Gene3D" id="3.30.70.870">
    <property type="entry name" value="Elongation Factor G (Translational Gtpase), domain 3"/>
    <property type="match status" value="1"/>
</dbReference>
<dbReference type="Gene3D" id="3.40.50.300">
    <property type="entry name" value="P-loop containing nucleotide triphosphate hydrolases"/>
    <property type="match status" value="1"/>
</dbReference>
<dbReference type="Gene3D" id="2.40.30.10">
    <property type="entry name" value="Translation factors"/>
    <property type="match status" value="1"/>
</dbReference>
<dbReference type="HAMAP" id="MF_00054_B">
    <property type="entry name" value="EF_G_EF_2_B"/>
    <property type="match status" value="1"/>
</dbReference>
<dbReference type="InterPro" id="IPR041095">
    <property type="entry name" value="EFG_II"/>
</dbReference>
<dbReference type="InterPro" id="IPR009022">
    <property type="entry name" value="EFG_III"/>
</dbReference>
<dbReference type="InterPro" id="IPR035647">
    <property type="entry name" value="EFG_III/V"/>
</dbReference>
<dbReference type="InterPro" id="IPR047872">
    <property type="entry name" value="EFG_IV"/>
</dbReference>
<dbReference type="InterPro" id="IPR035649">
    <property type="entry name" value="EFG_V"/>
</dbReference>
<dbReference type="InterPro" id="IPR000640">
    <property type="entry name" value="EFG_V-like"/>
</dbReference>
<dbReference type="InterPro" id="IPR004161">
    <property type="entry name" value="EFTu-like_2"/>
</dbReference>
<dbReference type="InterPro" id="IPR031157">
    <property type="entry name" value="G_TR_CS"/>
</dbReference>
<dbReference type="InterPro" id="IPR027417">
    <property type="entry name" value="P-loop_NTPase"/>
</dbReference>
<dbReference type="InterPro" id="IPR020568">
    <property type="entry name" value="Ribosomal_Su5_D2-typ_SF"/>
</dbReference>
<dbReference type="InterPro" id="IPR014721">
    <property type="entry name" value="Ribsml_uS5_D2-typ_fold_subgr"/>
</dbReference>
<dbReference type="InterPro" id="IPR005225">
    <property type="entry name" value="Small_GTP-bd"/>
</dbReference>
<dbReference type="InterPro" id="IPR000795">
    <property type="entry name" value="T_Tr_GTP-bd_dom"/>
</dbReference>
<dbReference type="InterPro" id="IPR009000">
    <property type="entry name" value="Transl_B-barrel_sf"/>
</dbReference>
<dbReference type="InterPro" id="IPR004540">
    <property type="entry name" value="Transl_elong_EFG/EF2"/>
</dbReference>
<dbReference type="InterPro" id="IPR005517">
    <property type="entry name" value="Transl_elong_EFG/EF2_IV"/>
</dbReference>
<dbReference type="NCBIfam" id="TIGR00484">
    <property type="entry name" value="EF-G"/>
    <property type="match status" value="1"/>
</dbReference>
<dbReference type="NCBIfam" id="NF009379">
    <property type="entry name" value="PRK12740.1-3"/>
    <property type="match status" value="1"/>
</dbReference>
<dbReference type="NCBIfam" id="NF009381">
    <property type="entry name" value="PRK12740.1-5"/>
    <property type="match status" value="1"/>
</dbReference>
<dbReference type="NCBIfam" id="TIGR00231">
    <property type="entry name" value="small_GTP"/>
    <property type="match status" value="1"/>
</dbReference>
<dbReference type="PANTHER" id="PTHR43261:SF1">
    <property type="entry name" value="RIBOSOME-RELEASING FACTOR 2, MITOCHONDRIAL"/>
    <property type="match status" value="1"/>
</dbReference>
<dbReference type="PANTHER" id="PTHR43261">
    <property type="entry name" value="TRANSLATION ELONGATION FACTOR G-RELATED"/>
    <property type="match status" value="1"/>
</dbReference>
<dbReference type="Pfam" id="PF00679">
    <property type="entry name" value="EFG_C"/>
    <property type="match status" value="1"/>
</dbReference>
<dbReference type="Pfam" id="PF14492">
    <property type="entry name" value="EFG_III"/>
    <property type="match status" value="1"/>
</dbReference>
<dbReference type="Pfam" id="PF03764">
    <property type="entry name" value="EFG_IV"/>
    <property type="match status" value="1"/>
</dbReference>
<dbReference type="Pfam" id="PF00009">
    <property type="entry name" value="GTP_EFTU"/>
    <property type="match status" value="1"/>
</dbReference>
<dbReference type="Pfam" id="PF03144">
    <property type="entry name" value="GTP_EFTU_D2"/>
    <property type="match status" value="1"/>
</dbReference>
<dbReference type="PRINTS" id="PR00315">
    <property type="entry name" value="ELONGATNFCT"/>
</dbReference>
<dbReference type="SMART" id="SM00838">
    <property type="entry name" value="EFG_C"/>
    <property type="match status" value="1"/>
</dbReference>
<dbReference type="SMART" id="SM00889">
    <property type="entry name" value="EFG_IV"/>
    <property type="match status" value="1"/>
</dbReference>
<dbReference type="SUPFAM" id="SSF54980">
    <property type="entry name" value="EF-G C-terminal domain-like"/>
    <property type="match status" value="2"/>
</dbReference>
<dbReference type="SUPFAM" id="SSF52540">
    <property type="entry name" value="P-loop containing nucleoside triphosphate hydrolases"/>
    <property type="match status" value="1"/>
</dbReference>
<dbReference type="SUPFAM" id="SSF54211">
    <property type="entry name" value="Ribosomal protein S5 domain 2-like"/>
    <property type="match status" value="1"/>
</dbReference>
<dbReference type="SUPFAM" id="SSF50447">
    <property type="entry name" value="Translation proteins"/>
    <property type="match status" value="1"/>
</dbReference>
<dbReference type="PROSITE" id="PS00301">
    <property type="entry name" value="G_TR_1"/>
    <property type="match status" value="1"/>
</dbReference>
<dbReference type="PROSITE" id="PS51722">
    <property type="entry name" value="G_TR_2"/>
    <property type="match status" value="1"/>
</dbReference>
<gene>
    <name evidence="1" type="primary">fusA</name>
    <name type="ordered locus">Dhaf_0419</name>
</gene>
<proteinExistence type="inferred from homology"/>
<accession>B8G1W3</accession>
<evidence type="ECO:0000255" key="1">
    <source>
        <dbReference type="HAMAP-Rule" id="MF_00054"/>
    </source>
</evidence>
<evidence type="ECO:0000256" key="2">
    <source>
        <dbReference type="SAM" id="MobiDB-lite"/>
    </source>
</evidence>
<reference key="1">
    <citation type="journal article" date="2012" name="BMC Microbiol.">
        <title>Genome sequence of Desulfitobacterium hafniense DCB-2, a Gram-positive anaerobe capable of dehalogenation and metal reduction.</title>
        <authorList>
            <person name="Kim S.H."/>
            <person name="Harzman C."/>
            <person name="Davis J.K."/>
            <person name="Hutcheson R."/>
            <person name="Broderick J.B."/>
            <person name="Marsh T.L."/>
            <person name="Tiedje J.M."/>
        </authorList>
    </citation>
    <scope>NUCLEOTIDE SEQUENCE [LARGE SCALE GENOMIC DNA]</scope>
    <source>
        <strain>DSM 10664 / DCB-2</strain>
    </source>
</reference>
<sequence>MARQFPLEKTRNIGIMAHIDAGKTTTTERILFYTGRVHKIGEVHDGAATMDWMVQEQERGITITSAATTAQWKGHRINIIDTPGHVDFTVEVERSLRVLDGAVAVFCSVGGVEPQSETVWRQADKYGVPRIAYINKMDRMGADFFRGVSMIADRLGANPVPIQIPIGAEDQFKGIIDLVTMKAMIYTDDLGTTSDVADIPGDLVDQANEYREKLLEAVADTDEELMMKYLEGEELTEEEIRNGIRKGTIGLKFIPVVCGSSFKNKGVQPLLDAVVEYMPAPTDVPNIKGVHPETGEADERHSSDKDPFSALAFKIMADPYVGKLAFFRVYSGVLGSGSYVYNSTKGKRERIGRILQMHANHREEIPEVYAGDIAAAVGLKDTTTGDTLCDDKAPIILESMQFPDPVINVAIEPKTKQDQEKMGTALARLAEEDPTFKMHTDQDSGQTIIEGMGELHLEIIVDRLQREFKVECNVGRPQVAYKETIRRAVKSEGKFVRQSGGRGQYGHCWIEIEPLEQGSGFEFVNKIVGGVIPREYIAPIGQGIEEAMQNGIQAGYPVMDIRATVYDGSYHDVDSSEMAFKIAGSMAFKAGAAKADPAIIEPVMKVEVTVPEEYMGEVIGDMNSRRGRIEGMEATGTAQIVRGFVPLSEMFGYATDLRSKTQGRGVYVMMFDHYEEVPKNIAEGIVAKRAGA</sequence>
<organism>
    <name type="scientific">Desulfitobacterium hafniense (strain DSM 10664 / DCB-2)</name>
    <dbReference type="NCBI Taxonomy" id="272564"/>
    <lineage>
        <taxon>Bacteria</taxon>
        <taxon>Bacillati</taxon>
        <taxon>Bacillota</taxon>
        <taxon>Clostridia</taxon>
        <taxon>Eubacteriales</taxon>
        <taxon>Desulfitobacteriaceae</taxon>
        <taxon>Desulfitobacterium</taxon>
    </lineage>
</organism>